<sequence length="1382" mass="153614">MAQAYVGQKRIRRYYGNIREVLEMPNLIEVQKSSYDLFLRSGDAEGHQDGEGIQGVFQSVFPIKDFNETATLEFVKYELEKPKYDVEECQSRDMTYAAPLKVTLRLIVFDVDETTGAKSVKDIKEQDVYMGDMPLMTQNGTFIVNGTERVVVSQMHRSPGVFFDHDRGKTHSSGKLLFACRIIPYRGSWLDFEFDAKDLVFARIDRRRKLPVTTLLYALGMDQEGIMDAFYNTVDYKLQRAGKGQAAGWVTKFFPERVRGTRPSFDLVNAETGEIITKAGDKVTPRLVKQLAEKGDINLLLPFEKIVGRFVAKDIINEQTGLIYAEAGDEITVEYDRDGEISGGLLKVLLDNGIEDIPVLDIDHVNVGPYIRNTMAADKNMSRDGALMDIYRVMRPGEPPTVEAASALFDSLFFDSERYDLSAVGRVKMNMRLDLDAPDTQRTLRKEDIIACIRGLVELRDGKGEIDDIDHLGNRRVRSVGELMENQYRIGLLRMERAIRERMSGVEIDTVMPQDLINAKPAAAAVREFFGSSQLSQFMDQTNPLSEVTDKRRLSALGPGGLTRERAGFEVRDVHPTHYGRMCPIETPEGQNIGLINSLATFARVNKYGFIETPYRKVVEGKVTDEVVYMSATEEMRHTIAQANATLDESGKFVDELVSTRQAGDFMLNPVEAVDLIDVSPKQLVSVAAALIPFLENDDANRALMGSNMQRQAVPLLRAEAPFVGTGMEATVARDSGAAIMARRGGIIDQVDAQRIVIRATEDLGAGDAGVDIYRLRKFKRSNQSSTINQRPLVKVGDKVVKGQVVADGPSTDQGELAIGRNVVVAFMPWNGYNYEDSILISERIHRDDVFTSIHIDEYEVAARDTKLGPEEITRDIPNVGEEALRNLDEAGIVYIGAEVGPGDILVGKITPKGESPMTPEEKLLRAIFGEKASDVRDTSLRLPPGAYGTIVEVRVFNRHGVDKDERALQIEREEVERLARDRDDELAILERNIYARLKSLIMGKEVVKGPKGIRAGAVVDEDLLGQLSRGQWWQLAVADEDTAKEVEALNQQFDAQKRALDNRFDDKVEKVRQGDDLPPGVMKMVKVFVAVKRKLQAGDKMAGRHGNKGVVSKVVPIEDMPFLSDGTPVDLVFNPLGVPSRMNVGQILETHMGWASRGLGIKIDEALQDYRRNGDMTPVREAMQNGYGDDFYAETFEGMEDETLLEHADAVRGGVPISTPVFDGAKEADINDALRRAGFDTSGQSIVFDGRTGEQFARPVTVGMKYVLKLHHLVDDKMHARSTGPYSLVTQQPLGGKAQFGGQRLGEMEVWALEAYGAAYTLQEMLTVKSDDVAGRTKVYESIVKGEDNFEAGVPESFNVLVKEVRGLGLNMELLDAEDEE</sequence>
<keyword id="KW-0240">DNA-directed RNA polymerase</keyword>
<keyword id="KW-0548">Nucleotidyltransferase</keyword>
<keyword id="KW-1185">Reference proteome</keyword>
<keyword id="KW-0804">Transcription</keyword>
<keyword id="KW-0808">Transferase</keyword>
<comment type="function">
    <text evidence="1">DNA-dependent RNA polymerase catalyzes the transcription of DNA into RNA using the four ribonucleoside triphosphates as substrates.</text>
</comment>
<comment type="catalytic activity">
    <reaction evidence="1">
        <text>RNA(n) + a ribonucleoside 5'-triphosphate = RNA(n+1) + diphosphate</text>
        <dbReference type="Rhea" id="RHEA:21248"/>
        <dbReference type="Rhea" id="RHEA-COMP:14527"/>
        <dbReference type="Rhea" id="RHEA-COMP:17342"/>
        <dbReference type="ChEBI" id="CHEBI:33019"/>
        <dbReference type="ChEBI" id="CHEBI:61557"/>
        <dbReference type="ChEBI" id="CHEBI:140395"/>
        <dbReference type="EC" id="2.7.7.6"/>
    </reaction>
</comment>
<comment type="subunit">
    <text evidence="1">The RNAP catalytic core consists of 2 alpha, 1 beta, 1 beta' and 1 omega subunit. When a sigma factor is associated with the core the holoenzyme is formed, which can initiate transcription.</text>
</comment>
<comment type="similarity">
    <text evidence="1">Belongs to the RNA polymerase beta chain family.</text>
</comment>
<dbReference type="EC" id="2.7.7.6" evidence="1"/>
<dbReference type="EMBL" id="CP000489">
    <property type="protein sequence ID" value="ABL68859.1"/>
    <property type="molecule type" value="Genomic_DNA"/>
</dbReference>
<dbReference type="RefSeq" id="WP_011747092.1">
    <property type="nucleotide sequence ID" value="NC_008686.1"/>
</dbReference>
<dbReference type="SMR" id="A1B015"/>
<dbReference type="STRING" id="318586.Pden_0747"/>
<dbReference type="EnsemblBacteria" id="ABL68859">
    <property type="protein sequence ID" value="ABL68859"/>
    <property type="gene ID" value="Pden_0747"/>
</dbReference>
<dbReference type="KEGG" id="pde:Pden_0747"/>
<dbReference type="eggNOG" id="COG0085">
    <property type="taxonomic scope" value="Bacteria"/>
</dbReference>
<dbReference type="HOGENOM" id="CLU_000524_4_0_5"/>
<dbReference type="OrthoDB" id="9803954at2"/>
<dbReference type="Proteomes" id="UP000000361">
    <property type="component" value="Chromosome 1"/>
</dbReference>
<dbReference type="GO" id="GO:0000428">
    <property type="term" value="C:DNA-directed RNA polymerase complex"/>
    <property type="evidence" value="ECO:0007669"/>
    <property type="project" value="UniProtKB-KW"/>
</dbReference>
<dbReference type="GO" id="GO:0003677">
    <property type="term" value="F:DNA binding"/>
    <property type="evidence" value="ECO:0007669"/>
    <property type="project" value="UniProtKB-UniRule"/>
</dbReference>
<dbReference type="GO" id="GO:0003899">
    <property type="term" value="F:DNA-directed RNA polymerase activity"/>
    <property type="evidence" value="ECO:0007669"/>
    <property type="project" value="UniProtKB-UniRule"/>
</dbReference>
<dbReference type="GO" id="GO:0032549">
    <property type="term" value="F:ribonucleoside binding"/>
    <property type="evidence" value="ECO:0007669"/>
    <property type="project" value="InterPro"/>
</dbReference>
<dbReference type="GO" id="GO:0006351">
    <property type="term" value="P:DNA-templated transcription"/>
    <property type="evidence" value="ECO:0007669"/>
    <property type="project" value="UniProtKB-UniRule"/>
</dbReference>
<dbReference type="CDD" id="cd00653">
    <property type="entry name" value="RNA_pol_B_RPB2"/>
    <property type="match status" value="1"/>
</dbReference>
<dbReference type="FunFam" id="3.90.1800.10:FF:000001">
    <property type="entry name" value="DNA-directed RNA polymerase subunit beta"/>
    <property type="match status" value="1"/>
</dbReference>
<dbReference type="Gene3D" id="2.40.50.100">
    <property type="match status" value="1"/>
</dbReference>
<dbReference type="Gene3D" id="2.40.50.150">
    <property type="match status" value="1"/>
</dbReference>
<dbReference type="Gene3D" id="3.90.1100.10">
    <property type="match status" value="2"/>
</dbReference>
<dbReference type="Gene3D" id="6.10.140.1670">
    <property type="match status" value="1"/>
</dbReference>
<dbReference type="Gene3D" id="2.30.150.10">
    <property type="entry name" value="DNA-directed RNA polymerase, beta subunit, external 1 domain"/>
    <property type="match status" value="1"/>
</dbReference>
<dbReference type="Gene3D" id="2.40.270.10">
    <property type="entry name" value="DNA-directed RNA polymerase, subunit 2, domain 6"/>
    <property type="match status" value="1"/>
</dbReference>
<dbReference type="Gene3D" id="3.90.1800.10">
    <property type="entry name" value="RNA polymerase alpha subunit dimerisation domain"/>
    <property type="match status" value="1"/>
</dbReference>
<dbReference type="Gene3D" id="3.90.1110.10">
    <property type="entry name" value="RNA polymerase Rpb2, domain 2"/>
    <property type="match status" value="1"/>
</dbReference>
<dbReference type="HAMAP" id="MF_01321">
    <property type="entry name" value="RNApol_bact_RpoB"/>
    <property type="match status" value="1"/>
</dbReference>
<dbReference type="InterPro" id="IPR042107">
    <property type="entry name" value="DNA-dir_RNA_pol_bsu_ext_1_sf"/>
</dbReference>
<dbReference type="InterPro" id="IPR019462">
    <property type="entry name" value="DNA-dir_RNA_pol_bsu_external_1"/>
</dbReference>
<dbReference type="InterPro" id="IPR015712">
    <property type="entry name" value="DNA-dir_RNA_pol_su2"/>
</dbReference>
<dbReference type="InterPro" id="IPR007120">
    <property type="entry name" value="DNA-dir_RNAP_su2_dom"/>
</dbReference>
<dbReference type="InterPro" id="IPR037033">
    <property type="entry name" value="DNA-dir_RNAP_su2_hyb_sf"/>
</dbReference>
<dbReference type="InterPro" id="IPR010243">
    <property type="entry name" value="RNA_pol_bsu_bac"/>
</dbReference>
<dbReference type="InterPro" id="IPR007121">
    <property type="entry name" value="RNA_pol_bsu_CS"/>
</dbReference>
<dbReference type="InterPro" id="IPR007644">
    <property type="entry name" value="RNA_pol_bsu_protrusion"/>
</dbReference>
<dbReference type="InterPro" id="IPR007642">
    <property type="entry name" value="RNA_pol_Rpb2_2"/>
</dbReference>
<dbReference type="InterPro" id="IPR037034">
    <property type="entry name" value="RNA_pol_Rpb2_2_sf"/>
</dbReference>
<dbReference type="InterPro" id="IPR007645">
    <property type="entry name" value="RNA_pol_Rpb2_3"/>
</dbReference>
<dbReference type="InterPro" id="IPR007641">
    <property type="entry name" value="RNA_pol_Rpb2_7"/>
</dbReference>
<dbReference type="InterPro" id="IPR014724">
    <property type="entry name" value="RNA_pol_RPB2_OB-fold"/>
</dbReference>
<dbReference type="NCBIfam" id="NF001616">
    <property type="entry name" value="PRK00405.1"/>
    <property type="match status" value="1"/>
</dbReference>
<dbReference type="NCBIfam" id="TIGR02013">
    <property type="entry name" value="rpoB"/>
    <property type="match status" value="1"/>
</dbReference>
<dbReference type="PANTHER" id="PTHR20856">
    <property type="entry name" value="DNA-DIRECTED RNA POLYMERASE I SUBUNIT 2"/>
    <property type="match status" value="1"/>
</dbReference>
<dbReference type="Pfam" id="PF04563">
    <property type="entry name" value="RNA_pol_Rpb2_1"/>
    <property type="match status" value="1"/>
</dbReference>
<dbReference type="Pfam" id="PF04561">
    <property type="entry name" value="RNA_pol_Rpb2_2"/>
    <property type="match status" value="2"/>
</dbReference>
<dbReference type="Pfam" id="PF04565">
    <property type="entry name" value="RNA_pol_Rpb2_3"/>
    <property type="match status" value="1"/>
</dbReference>
<dbReference type="Pfam" id="PF10385">
    <property type="entry name" value="RNA_pol_Rpb2_45"/>
    <property type="match status" value="1"/>
</dbReference>
<dbReference type="Pfam" id="PF00562">
    <property type="entry name" value="RNA_pol_Rpb2_6"/>
    <property type="match status" value="1"/>
</dbReference>
<dbReference type="Pfam" id="PF04560">
    <property type="entry name" value="RNA_pol_Rpb2_7"/>
    <property type="match status" value="1"/>
</dbReference>
<dbReference type="SUPFAM" id="SSF64484">
    <property type="entry name" value="beta and beta-prime subunits of DNA dependent RNA-polymerase"/>
    <property type="match status" value="1"/>
</dbReference>
<dbReference type="PROSITE" id="PS01166">
    <property type="entry name" value="RNA_POL_BETA"/>
    <property type="match status" value="1"/>
</dbReference>
<feature type="chain" id="PRO_0000300364" description="DNA-directed RNA polymerase subunit beta">
    <location>
        <begin position="1"/>
        <end position="1382"/>
    </location>
</feature>
<reference key="1">
    <citation type="submission" date="2006-12" db="EMBL/GenBank/DDBJ databases">
        <title>Complete sequence of chromosome 1 of Paracoccus denitrificans PD1222.</title>
        <authorList>
            <person name="Copeland A."/>
            <person name="Lucas S."/>
            <person name="Lapidus A."/>
            <person name="Barry K."/>
            <person name="Detter J.C."/>
            <person name="Glavina del Rio T."/>
            <person name="Hammon N."/>
            <person name="Israni S."/>
            <person name="Dalin E."/>
            <person name="Tice H."/>
            <person name="Pitluck S."/>
            <person name="Munk A.C."/>
            <person name="Brettin T."/>
            <person name="Bruce D."/>
            <person name="Han C."/>
            <person name="Tapia R."/>
            <person name="Gilna P."/>
            <person name="Schmutz J."/>
            <person name="Larimer F."/>
            <person name="Land M."/>
            <person name="Hauser L."/>
            <person name="Kyrpides N."/>
            <person name="Lykidis A."/>
            <person name="Spiro S."/>
            <person name="Richardson D.J."/>
            <person name="Moir J.W.B."/>
            <person name="Ferguson S.J."/>
            <person name="van Spanning R.J.M."/>
            <person name="Richardson P."/>
        </authorList>
    </citation>
    <scope>NUCLEOTIDE SEQUENCE [LARGE SCALE GENOMIC DNA]</scope>
    <source>
        <strain>Pd 1222</strain>
    </source>
</reference>
<name>RPOB_PARDP</name>
<protein>
    <recommendedName>
        <fullName evidence="1">DNA-directed RNA polymerase subunit beta</fullName>
        <shortName evidence="1">RNAP subunit beta</shortName>
        <ecNumber evidence="1">2.7.7.6</ecNumber>
    </recommendedName>
    <alternativeName>
        <fullName evidence="1">RNA polymerase subunit beta</fullName>
    </alternativeName>
    <alternativeName>
        <fullName evidence="1">Transcriptase subunit beta</fullName>
    </alternativeName>
</protein>
<organism>
    <name type="scientific">Paracoccus denitrificans (strain Pd 1222)</name>
    <dbReference type="NCBI Taxonomy" id="318586"/>
    <lineage>
        <taxon>Bacteria</taxon>
        <taxon>Pseudomonadati</taxon>
        <taxon>Pseudomonadota</taxon>
        <taxon>Alphaproteobacteria</taxon>
        <taxon>Rhodobacterales</taxon>
        <taxon>Paracoccaceae</taxon>
        <taxon>Paracoccus</taxon>
    </lineage>
</organism>
<accession>A1B015</accession>
<proteinExistence type="inferred from homology"/>
<gene>
    <name evidence="1" type="primary">rpoB</name>
    <name type="ordered locus">Pden_0747</name>
</gene>
<evidence type="ECO:0000255" key="1">
    <source>
        <dbReference type="HAMAP-Rule" id="MF_01321"/>
    </source>
</evidence>